<gene>
    <name type="primary">virB9</name>
    <name type="ordered locus">Atu6175</name>
    <name type="ORF">AGR_pTi_12</name>
</gene>
<geneLocation type="plasmid">
    <name>pTiC58</name>
</geneLocation>
<protein>
    <recommendedName>
        <fullName>Protein virB9</fullName>
    </recommendedName>
</protein>
<accession>P17799</accession>
<reference key="1">
    <citation type="journal article" date="1990" name="Mol. Gen. Genet.">
        <title>The virB operon of Agrobacterium tumefaciens pTiC58 encodes 11 open reading frames.</title>
        <authorList>
            <person name="Kuldau G.A."/>
            <person name="de Vos G."/>
            <person name="Owen J."/>
            <person name="McCaffrey G."/>
            <person name="Zambryski P."/>
        </authorList>
    </citation>
    <scope>NUCLEOTIDE SEQUENCE [GENOMIC DNA]</scope>
</reference>
<reference key="2">
    <citation type="journal article" date="1990" name="Plasmid">
        <title>Molecular characterization of the vir regulon of Agrobacterium tumefaciens: complete nucleotide sequence and gene organization of the 28.63-kbp regulon cloned as a single unit.</title>
        <authorList>
            <person name="Rogowsky P.M."/>
            <person name="Powell B.S."/>
            <person name="Shirasu K."/>
            <person name="Lin T.-S."/>
            <person name="Morel P."/>
            <person name="Zyprian E.M."/>
            <person name="Steck T.R."/>
            <person name="Kado C.I."/>
        </authorList>
    </citation>
    <scope>NUCLEOTIDE SEQUENCE [GENOMIC DNA]</scope>
</reference>
<reference key="3">
    <citation type="journal article" date="1990" name="Mol. Microbiol.">
        <title>Characterization of the virB operon of an Agrobacterium tumefaciens Ti plasmid: nucleotide sequence and protein analysis.</title>
        <authorList>
            <person name="Shirasu K."/>
            <person name="Morel P."/>
            <person name="Kado C.I."/>
        </authorList>
    </citation>
    <scope>NUCLEOTIDE SEQUENCE [GENOMIC DNA]</scope>
</reference>
<reference key="4">
    <citation type="journal article" date="2001" name="Science">
        <title>The genome of the natural genetic engineer Agrobacterium tumefaciens C58.</title>
        <authorList>
            <person name="Wood D.W."/>
            <person name="Setubal J.C."/>
            <person name="Kaul R."/>
            <person name="Monks D.E."/>
            <person name="Kitajima J.P."/>
            <person name="Okura V.K."/>
            <person name="Zhou Y."/>
            <person name="Chen L."/>
            <person name="Wood G.E."/>
            <person name="Almeida N.F. Jr."/>
            <person name="Woo L."/>
            <person name="Chen Y."/>
            <person name="Paulsen I.T."/>
            <person name="Eisen J.A."/>
            <person name="Karp P.D."/>
            <person name="Bovee D. Sr."/>
            <person name="Chapman P."/>
            <person name="Clendenning J."/>
            <person name="Deatherage G."/>
            <person name="Gillet W."/>
            <person name="Grant C."/>
            <person name="Kutyavin T."/>
            <person name="Levy R."/>
            <person name="Li M.-J."/>
            <person name="McClelland E."/>
            <person name="Palmieri A."/>
            <person name="Raymond C."/>
            <person name="Rouse G."/>
            <person name="Saenphimmachak C."/>
            <person name="Wu Z."/>
            <person name="Romero P."/>
            <person name="Gordon D."/>
            <person name="Zhang S."/>
            <person name="Yoo H."/>
            <person name="Tao Y."/>
            <person name="Biddle P."/>
            <person name="Jung M."/>
            <person name="Krespan W."/>
            <person name="Perry M."/>
            <person name="Gordon-Kamm B."/>
            <person name="Liao L."/>
            <person name="Kim S."/>
            <person name="Hendrick C."/>
            <person name="Zhao Z.-Y."/>
            <person name="Dolan M."/>
            <person name="Chumley F."/>
            <person name="Tingey S.V."/>
            <person name="Tomb J.-F."/>
            <person name="Gordon M.P."/>
            <person name="Olson M.V."/>
            <person name="Nester E.W."/>
        </authorList>
    </citation>
    <scope>NUCLEOTIDE SEQUENCE [LARGE SCALE GENOMIC DNA]</scope>
</reference>
<reference key="5">
    <citation type="journal article" date="2001" name="Science">
        <title>Genome sequence of the plant pathogen and biotechnology agent Agrobacterium tumefaciens C58.</title>
        <authorList>
            <person name="Goodner B."/>
            <person name="Hinkle G."/>
            <person name="Gattung S."/>
            <person name="Miller N."/>
            <person name="Blanchard M."/>
            <person name="Qurollo B."/>
            <person name="Goldman B.S."/>
            <person name="Cao Y."/>
            <person name="Askenazi M."/>
            <person name="Halling C."/>
            <person name="Mullin L."/>
            <person name="Houmiel K."/>
            <person name="Gordon J."/>
            <person name="Vaudin M."/>
            <person name="Iartchouk O."/>
            <person name="Epp A."/>
            <person name="Liu F."/>
            <person name="Wollam C."/>
            <person name="Allinger M."/>
            <person name="Doughty D."/>
            <person name="Scott C."/>
            <person name="Lappas C."/>
            <person name="Markelz B."/>
            <person name="Flanagan C."/>
            <person name="Crowell C."/>
            <person name="Gurson J."/>
            <person name="Lomo C."/>
            <person name="Sear C."/>
            <person name="Strub G."/>
            <person name="Cielo C."/>
            <person name="Slater S."/>
        </authorList>
    </citation>
    <scope>NUCLEOTIDE SEQUENCE [LARGE SCALE GENOMIC DNA]</scope>
    <source>
        <strain>C58 / ATCC 33970</strain>
    </source>
</reference>
<comment type="function">
    <text evidence="1">Is essential for the biogenesis of the T-pilus, which is required for virulence and T-DNA transfer to plant cells. When is associated with virB7, might function as a nucleation center for recruitment of VirB proteins during assembly of the T-DNA transfer machine (By similarity).</text>
</comment>
<comment type="subunit">
    <text evidence="1">Heterodimer of virB7 and virB9; disulfide-linked.</text>
</comment>
<comment type="interaction">
    <interactant intactId="EBI-2012881">
        <id>P17799</id>
    </interactant>
    <interactant intactId="EBI-2013080">
        <id>P17800</id>
        <label>virB10</label>
    </interactant>
    <organismsDiffer>false</organismsDiffer>
    <experiments>3</experiments>
</comment>
<comment type="subcellular location">
    <subcellularLocation>
        <location evidence="1">Cell membrane</location>
        <topology evidence="1">Peripheral membrane protein</topology>
    </subcellularLocation>
</comment>
<comment type="similarity">
    <text evidence="3">Belongs to the TrbG/VirB9 family.</text>
</comment>
<sequence>MTKKAFLTLACLLFAAIGARAEDTPTAGRLDPRMRYLAYNPDQVVRLSTAVGATLVVTFGANETVTAVAVSNSKDLAALPRGNYLFFKASKVLPPQPVVVLTASDAGMRRYVFSISSKTLPHLDKEQADLYYSVQFAYPADDAAARQKAAQEKAVADRIRAEAQYQQRAEGLLEQPATTVGAEDKNWHYVAQGDRSLLPLEVFDDGFTTVFHFPGNVRIPSIYTINPDGKEAVANYSVKGSYVEISSVSRGWRLRDGHTVLCIWNTAYDPVGRRPETGTVRPDVKRVLKEVRG</sequence>
<feature type="signal peptide" evidence="2">
    <location>
        <begin position="1"/>
        <end position="21"/>
    </location>
</feature>
<feature type="chain" id="PRO_0000022672" description="Protein virB9">
    <location>
        <begin position="22"/>
        <end position="293"/>
    </location>
</feature>
<feature type="disulfide bond" description="Interchain (with C-24 in virB7)" evidence="1">
    <location>
        <position position="262"/>
    </location>
</feature>
<feature type="sequence conflict" description="In Ref. 2 and 3." evidence="3" ref="2 3">
    <original>R</original>
    <variation>P</variation>
    <location>
        <position position="146"/>
    </location>
</feature>
<keyword id="KW-1003">Cell membrane</keyword>
<keyword id="KW-0192">Crown gall tumor</keyword>
<keyword id="KW-1015">Disulfide bond</keyword>
<keyword id="KW-0472">Membrane</keyword>
<keyword id="KW-0614">Plasmid</keyword>
<keyword id="KW-1185">Reference proteome</keyword>
<keyword id="KW-0732">Signal</keyword>
<keyword id="KW-0843">Virulence</keyword>
<evidence type="ECO:0000250" key="1"/>
<evidence type="ECO:0000255" key="2"/>
<evidence type="ECO:0000305" key="3"/>
<organism>
    <name type="scientific">Agrobacterium fabrum (strain C58 / ATCC 33970)</name>
    <name type="common">Agrobacterium tumefaciens (strain C58)</name>
    <dbReference type="NCBI Taxonomy" id="176299"/>
    <lineage>
        <taxon>Bacteria</taxon>
        <taxon>Pseudomonadati</taxon>
        <taxon>Pseudomonadota</taxon>
        <taxon>Alphaproteobacteria</taxon>
        <taxon>Hyphomicrobiales</taxon>
        <taxon>Rhizobiaceae</taxon>
        <taxon>Rhizobium/Agrobacterium group</taxon>
        <taxon>Agrobacterium</taxon>
        <taxon>Agrobacterium tumefaciens complex</taxon>
    </lineage>
</organism>
<dbReference type="EMBL" id="X53264">
    <property type="protein sequence ID" value="CAA37362.1"/>
    <property type="molecule type" value="Genomic_DNA"/>
</dbReference>
<dbReference type="EMBL" id="J03320">
    <property type="protein sequence ID" value="AAA91599.1"/>
    <property type="molecule type" value="Genomic_DNA"/>
</dbReference>
<dbReference type="EMBL" id="AE007871">
    <property type="protein sequence ID" value="AAK90937.1"/>
    <property type="molecule type" value="Genomic_DNA"/>
</dbReference>
<dbReference type="PIR" id="AE3249">
    <property type="entry name" value="AE3249"/>
</dbReference>
<dbReference type="PIR" id="S12349">
    <property type="entry name" value="B9AG58"/>
</dbReference>
<dbReference type="RefSeq" id="NP_396496.1">
    <property type="nucleotide sequence ID" value="NC_003065.3"/>
</dbReference>
<dbReference type="RefSeq" id="WP_010891495.1">
    <property type="nucleotide sequence ID" value="NC_003065.3"/>
</dbReference>
<dbReference type="SMR" id="P17799"/>
<dbReference type="IntAct" id="P17799">
    <property type="interactions" value="3"/>
</dbReference>
<dbReference type="EnsemblBacteria" id="AAK90937">
    <property type="protein sequence ID" value="AAK90937"/>
    <property type="gene ID" value="Atu6175"/>
</dbReference>
<dbReference type="GeneID" id="86882430"/>
<dbReference type="GeneID" id="92775042"/>
<dbReference type="KEGG" id="atu:Atu6175"/>
<dbReference type="HOGENOM" id="CLU_058585_3_0_5"/>
<dbReference type="OrthoDB" id="7390264at2"/>
<dbReference type="PhylomeDB" id="P17799"/>
<dbReference type="BioCyc" id="AGRO:ATU6175-MONOMER"/>
<dbReference type="Proteomes" id="UP000000813">
    <property type="component" value="Plasmid Ti"/>
</dbReference>
<dbReference type="GO" id="GO:0005886">
    <property type="term" value="C:plasma membrane"/>
    <property type="evidence" value="ECO:0007669"/>
    <property type="project" value="UniProtKB-SubCell"/>
</dbReference>
<dbReference type="GO" id="GO:0043684">
    <property type="term" value="C:type IV secretion system complex"/>
    <property type="evidence" value="ECO:0000317"/>
    <property type="project" value="PAMGO_GAT"/>
</dbReference>
<dbReference type="GO" id="GO:0030255">
    <property type="term" value="P:protein secretion by the type IV secretion system"/>
    <property type="evidence" value="ECO:0000317"/>
    <property type="project" value="PAMGO_GAT"/>
</dbReference>
<dbReference type="CDD" id="cd06911">
    <property type="entry name" value="VirB9_CagX_TrbG"/>
    <property type="match status" value="1"/>
</dbReference>
<dbReference type="FunFam" id="2.60.40.2500:FF:000001">
    <property type="entry name" value="Protein virB9"/>
    <property type="match status" value="1"/>
</dbReference>
<dbReference type="Gene3D" id="2.60.40.2500">
    <property type="match status" value="1"/>
</dbReference>
<dbReference type="InterPro" id="IPR010258">
    <property type="entry name" value="Conjugal_tfr_TrbG/VirB9/CagX"/>
</dbReference>
<dbReference type="InterPro" id="IPR014148">
    <property type="entry name" value="VirB9"/>
</dbReference>
<dbReference type="InterPro" id="IPR033645">
    <property type="entry name" value="VirB9/CagX/TrbG_C"/>
</dbReference>
<dbReference type="InterPro" id="IPR038161">
    <property type="entry name" value="VirB9/CagX/TrbG_C_sf"/>
</dbReference>
<dbReference type="NCBIfam" id="NF010435">
    <property type="entry name" value="PRK13861.1"/>
    <property type="match status" value="1"/>
</dbReference>
<dbReference type="NCBIfam" id="TIGR02781">
    <property type="entry name" value="VirB9"/>
    <property type="match status" value="1"/>
</dbReference>
<dbReference type="Pfam" id="PF03524">
    <property type="entry name" value="CagX"/>
    <property type="match status" value="1"/>
</dbReference>
<proteinExistence type="evidence at protein level"/>
<name>VIRB9_AGRFC</name>